<name>AGAS_SHESA</name>
<gene>
    <name evidence="3" type="primary">agaS</name>
    <name type="ordered locus">Shewana3_2699</name>
</gene>
<comment type="function">
    <text evidence="2">Involved in the pathway of N-acetyl-D-galactosamine degradation. Catalyzes the conversion of D-galactosamine 6-phosphate (GalN-6-P) to D-tagatofuranose 6-phosphate (Tag-6-P). It can also catalyze the conversion of D-glucosamine 6-phosphate.</text>
</comment>
<comment type="catalytic activity">
    <reaction evidence="2">
        <text>D-galactosamine 6-phosphate + H2O = D-tagatopyranose 1-phosphate + NH4(+)</text>
        <dbReference type="Rhea" id="RHEA:47680"/>
        <dbReference type="ChEBI" id="CHEBI:15377"/>
        <dbReference type="ChEBI" id="CHEBI:28938"/>
        <dbReference type="ChEBI" id="CHEBI:71674"/>
        <dbReference type="ChEBI" id="CHEBI:138150"/>
    </reaction>
</comment>
<comment type="catalytic activity">
    <reaction evidence="2">
        <text>alpha-D-glucosamine 6-phosphate + H2O = beta-D-fructose 6-phosphate + NH4(+)</text>
        <dbReference type="Rhea" id="RHEA:12172"/>
        <dbReference type="ChEBI" id="CHEBI:15377"/>
        <dbReference type="ChEBI" id="CHEBI:28938"/>
        <dbReference type="ChEBI" id="CHEBI:57634"/>
        <dbReference type="ChEBI" id="CHEBI:75989"/>
        <dbReference type="EC" id="3.5.99.6"/>
    </reaction>
</comment>
<comment type="subcellular location">
    <subcellularLocation>
        <location evidence="5">Cytoplasm</location>
    </subcellularLocation>
</comment>
<comment type="miscellaneous">
    <text evidence="5">In Shewanella sp., the active phosphotransferase system (PTS) specific for the transport of GalNAc and GalN is replaced by a set of GalNAc- and GalN-specific permeases and kinases (AgaP and AgaK, respectively).</text>
</comment>
<comment type="similarity">
    <text evidence="4">Belongs to the SIS family. AgaS subfamily.</text>
</comment>
<dbReference type="EC" id="3.5.99.-" evidence="2"/>
<dbReference type="EC" id="3.5.99.6" evidence="2"/>
<dbReference type="EMBL" id="CP000469">
    <property type="protein sequence ID" value="ABK48926.1"/>
    <property type="molecule type" value="Genomic_DNA"/>
</dbReference>
<dbReference type="RefSeq" id="WP_011717583.1">
    <property type="nucleotide sequence ID" value="NC_008577.1"/>
</dbReference>
<dbReference type="SMR" id="A0KYQ7"/>
<dbReference type="STRING" id="94122.Shewana3_2699"/>
<dbReference type="KEGG" id="shn:Shewana3_2699"/>
<dbReference type="eggNOG" id="COG2222">
    <property type="taxonomic scope" value="Bacteria"/>
</dbReference>
<dbReference type="HOGENOM" id="CLU_012520_0_0_6"/>
<dbReference type="OrthoDB" id="9779207at2"/>
<dbReference type="BioCyc" id="MetaCyc:MONOMER-17512"/>
<dbReference type="Proteomes" id="UP000002589">
    <property type="component" value="Chromosome"/>
</dbReference>
<dbReference type="GO" id="GO:0005737">
    <property type="term" value="C:cytoplasm"/>
    <property type="evidence" value="ECO:0007669"/>
    <property type="project" value="UniProtKB-SubCell"/>
</dbReference>
<dbReference type="GO" id="GO:0005886">
    <property type="term" value="C:plasma membrane"/>
    <property type="evidence" value="ECO:0007669"/>
    <property type="project" value="TreeGrafter"/>
</dbReference>
<dbReference type="GO" id="GO:0097367">
    <property type="term" value="F:carbohydrate derivative binding"/>
    <property type="evidence" value="ECO:0007669"/>
    <property type="project" value="InterPro"/>
</dbReference>
<dbReference type="GO" id="GO:0004342">
    <property type="term" value="F:glucosamine-6-phosphate deaminase activity"/>
    <property type="evidence" value="ECO:0000314"/>
    <property type="project" value="UniProtKB"/>
</dbReference>
<dbReference type="GO" id="GO:0006044">
    <property type="term" value="P:N-acetylglucosamine metabolic process"/>
    <property type="evidence" value="ECO:0000314"/>
    <property type="project" value="UniProtKB"/>
</dbReference>
<dbReference type="GO" id="GO:0009401">
    <property type="term" value="P:phosphoenolpyruvate-dependent sugar phosphotransferase system"/>
    <property type="evidence" value="ECO:0007669"/>
    <property type="project" value="TreeGrafter"/>
</dbReference>
<dbReference type="CDD" id="cd05010">
    <property type="entry name" value="SIS_AgaS_like"/>
    <property type="match status" value="1"/>
</dbReference>
<dbReference type="CDD" id="cd05008">
    <property type="entry name" value="SIS_GlmS_GlmD_1"/>
    <property type="match status" value="1"/>
</dbReference>
<dbReference type="Gene3D" id="3.40.50.10490">
    <property type="entry name" value="Glucose-6-phosphate isomerase like protein, domain 1"/>
    <property type="match status" value="2"/>
</dbReference>
<dbReference type="InterPro" id="IPR050303">
    <property type="entry name" value="GatZ_KbaZ_carbometab"/>
</dbReference>
<dbReference type="InterPro" id="IPR035466">
    <property type="entry name" value="GlmS/AgaS_SIS"/>
</dbReference>
<dbReference type="InterPro" id="IPR035464">
    <property type="entry name" value="SIS_AgaS"/>
</dbReference>
<dbReference type="InterPro" id="IPR001347">
    <property type="entry name" value="SIS_dom"/>
</dbReference>
<dbReference type="InterPro" id="IPR046348">
    <property type="entry name" value="SIS_dom_sf"/>
</dbReference>
<dbReference type="PANTHER" id="PTHR32502:SF3">
    <property type="entry name" value="D-GALACTOSAMINE-6-PHOSPHATE DEAMINASE AGAS-RELATED"/>
    <property type="match status" value="1"/>
</dbReference>
<dbReference type="PANTHER" id="PTHR32502">
    <property type="entry name" value="N-ACETYLGALACTOSAMINE PERMEASE II COMPONENT-RELATED"/>
    <property type="match status" value="1"/>
</dbReference>
<dbReference type="Pfam" id="PF01380">
    <property type="entry name" value="SIS"/>
    <property type="match status" value="2"/>
</dbReference>
<dbReference type="SUPFAM" id="SSF53697">
    <property type="entry name" value="SIS domain"/>
    <property type="match status" value="1"/>
</dbReference>
<dbReference type="PROSITE" id="PS51464">
    <property type="entry name" value="SIS"/>
    <property type="match status" value="2"/>
</dbReference>
<organism>
    <name type="scientific">Shewanella sp. (strain ANA-3)</name>
    <dbReference type="NCBI Taxonomy" id="94122"/>
    <lineage>
        <taxon>Bacteria</taxon>
        <taxon>Pseudomonadati</taxon>
        <taxon>Pseudomonadota</taxon>
        <taxon>Gammaproteobacteria</taxon>
        <taxon>Alteromonadales</taxon>
        <taxon>Shewanellaceae</taxon>
        <taxon>Shewanella</taxon>
    </lineage>
</organism>
<evidence type="ECO:0000255" key="1">
    <source>
        <dbReference type="PROSITE-ProRule" id="PRU00797"/>
    </source>
</evidence>
<evidence type="ECO:0000269" key="2">
    <source>
    </source>
</evidence>
<evidence type="ECO:0000303" key="3">
    <source>
    </source>
</evidence>
<evidence type="ECO:0000305" key="4"/>
<evidence type="ECO:0000305" key="5">
    <source>
    </source>
</evidence>
<evidence type="ECO:0000312" key="6">
    <source>
        <dbReference type="Proteomes" id="UP000002589"/>
    </source>
</evidence>
<protein>
    <recommendedName>
        <fullName evidence="3">D-galactosamine-6-phosphate deaminase AgaS</fullName>
        <shortName evidence="3">GalN-6-P deaminase</shortName>
        <ecNumber evidence="2">3.5.99.-</ecNumber>
    </recommendedName>
    <alternativeName>
        <fullName evidence="3">Glucosamine-6-phosphate deaminase</fullName>
        <shortName evidence="5">GlcN-6-P deaminase</shortName>
        <ecNumber evidence="2">3.5.99.6</ecNumber>
    </alternativeName>
</protein>
<proteinExistence type="evidence at protein level"/>
<feature type="chain" id="PRO_0000433130" description="D-galactosamine-6-phosphate deaminase AgaS">
    <location>
        <begin position="1"/>
        <end position="386"/>
    </location>
</feature>
<feature type="domain" description="SIS 1" evidence="1">
    <location>
        <begin position="59"/>
        <end position="217"/>
    </location>
</feature>
<feature type="domain" description="SIS 2" evidence="1">
    <location>
        <begin position="222"/>
        <end position="366"/>
    </location>
</feature>
<accession>A0KYQ7</accession>
<sequence length="386" mass="42692">MLTSPLSPFEHEDSNLLLSAEQLTQYGAFWTAKEISQQPKMWRKVSEQHSDNRTIAAWLTPILAKPQLRIILTGAGTSAYIGDVLAAHIQQHLPLATQQVEAISTTDIVSHPELYLRGNIPTLLISYGRSGNSPESMAAVELAEQLVDDCYHLAITCNGQGKLANYCADKSHCYLYKLPDETHDVSFAMTSSFTCMYLATLLIFAPNSQALMQCIEMAEHILTERLADIRLQSEQPSKRVVFLGGGPLKAIAQEAALKYLELTAGQVVSAFESPLGFRHGPKSLVDSHTQVLVMMSSDPYTRQYDNDLIQELKRDNQALSVLTLSEELLTGSSGLNEVWLGLPFILWCQILAIYKAIQLKVSPDNPCPTGQVNRVVQGVNVYPFVK</sequence>
<reference key="1">
    <citation type="submission" date="2006-09" db="EMBL/GenBank/DDBJ databases">
        <title>Complete sequence of chromosome 1 of Shewanella sp. ANA-3.</title>
        <authorList>
            <person name="Copeland A."/>
            <person name="Lucas S."/>
            <person name="Lapidus A."/>
            <person name="Barry K."/>
            <person name="Detter J.C."/>
            <person name="Glavina del Rio T."/>
            <person name="Hammon N."/>
            <person name="Israni S."/>
            <person name="Dalin E."/>
            <person name="Tice H."/>
            <person name="Pitluck S."/>
            <person name="Chertkov O."/>
            <person name="Brettin T."/>
            <person name="Bruce D."/>
            <person name="Han C."/>
            <person name="Tapia R."/>
            <person name="Gilna P."/>
            <person name="Schmutz J."/>
            <person name="Larimer F."/>
            <person name="Land M."/>
            <person name="Hauser L."/>
            <person name="Kyrpides N."/>
            <person name="Kim E."/>
            <person name="Newman D."/>
            <person name="Salticov C."/>
            <person name="Konstantinidis K."/>
            <person name="Klappenback J."/>
            <person name="Tiedje J."/>
            <person name="Richardson P."/>
        </authorList>
    </citation>
    <scope>NUCLEOTIDE SEQUENCE [LARGE SCALE GENOMIC DNA]</scope>
    <source>
        <strain evidence="6">ANA-3</strain>
    </source>
</reference>
<reference key="2">
    <citation type="journal article" date="2012" name="J. Biol. Chem.">
        <title>N-acetylgalactosamine utilization pathway and regulon in proteobacteria: genomic reconstruction and experimental characterization in Shewanella.</title>
        <authorList>
            <person name="Leyn S.A."/>
            <person name="Gao F."/>
            <person name="Yang C."/>
            <person name="Rodionov D.A."/>
        </authorList>
    </citation>
    <scope>FUNCTION</scope>
    <scope>CATALYTIC ACTIVITY</scope>
    <scope>SUBSTRATE SPECIFICITY</scope>
    <source>
        <strain>ANA-3</strain>
    </source>
</reference>
<keyword id="KW-0119">Carbohydrate metabolism</keyword>
<keyword id="KW-0963">Cytoplasm</keyword>
<keyword id="KW-0378">Hydrolase</keyword>
<keyword id="KW-0677">Repeat</keyword>